<name>ALBA1_ARCFU</name>
<evidence type="ECO:0000255" key="1">
    <source>
        <dbReference type="HAMAP-Rule" id="MF_01122"/>
    </source>
</evidence>
<evidence type="ECO:0000305" key="2"/>
<sequence length="89" mass="9676">MAENSVFVGNKPVMNYVLAVLTQFNSGATEVSIKARGRAISRAVDVAEIVRKRFLPDVDVKDIKISTEQIDSEQGTANVSAIEIILAKK</sequence>
<reference key="1">
    <citation type="journal article" date="1997" name="Nature">
        <title>The complete genome sequence of the hyperthermophilic, sulphate-reducing archaeon Archaeoglobus fulgidus.</title>
        <authorList>
            <person name="Klenk H.-P."/>
            <person name="Clayton R.A."/>
            <person name="Tomb J.-F."/>
            <person name="White O."/>
            <person name="Nelson K.E."/>
            <person name="Ketchum K.A."/>
            <person name="Dodson R.J."/>
            <person name="Gwinn M.L."/>
            <person name="Hickey E.K."/>
            <person name="Peterson J.D."/>
            <person name="Richardson D.L."/>
            <person name="Kerlavage A.R."/>
            <person name="Graham D.E."/>
            <person name="Kyrpides N.C."/>
            <person name="Fleischmann R.D."/>
            <person name="Quackenbush J."/>
            <person name="Lee N.H."/>
            <person name="Sutton G.G."/>
            <person name="Gill S.R."/>
            <person name="Kirkness E.F."/>
            <person name="Dougherty B.A."/>
            <person name="McKenney K."/>
            <person name="Adams M.D."/>
            <person name="Loftus B.J."/>
            <person name="Peterson S.N."/>
            <person name="Reich C.I."/>
            <person name="McNeil L.K."/>
            <person name="Badger J.H."/>
            <person name="Glodek A."/>
            <person name="Zhou L."/>
            <person name="Overbeek R."/>
            <person name="Gocayne J.D."/>
            <person name="Weidman J.F."/>
            <person name="McDonald L.A."/>
            <person name="Utterback T.R."/>
            <person name="Cotton M.D."/>
            <person name="Spriggs T."/>
            <person name="Artiach P."/>
            <person name="Kaine B.P."/>
            <person name="Sykes S.M."/>
            <person name="Sadow P.W."/>
            <person name="D'Andrea K.P."/>
            <person name="Bowman C."/>
            <person name="Fujii C."/>
            <person name="Garland S.A."/>
            <person name="Mason T.M."/>
            <person name="Olsen G.J."/>
            <person name="Fraser C.M."/>
            <person name="Smith H.O."/>
            <person name="Woese C.R."/>
            <person name="Venter J.C."/>
        </authorList>
    </citation>
    <scope>NUCLEOTIDE SEQUENCE [LARGE SCALE GENOMIC DNA]</scope>
    <source>
        <strain>ATCC 49558 / DSM 4304 / JCM 9628 / NBRC 100126 / VC-16</strain>
    </source>
</reference>
<accession>O29195</accession>
<dbReference type="EMBL" id="AE000782">
    <property type="protein sequence ID" value="AAB90173.1"/>
    <property type="molecule type" value="Genomic_DNA"/>
</dbReference>
<dbReference type="PIR" id="C69383">
    <property type="entry name" value="C69383"/>
</dbReference>
<dbReference type="SMR" id="O29195"/>
<dbReference type="STRING" id="224325.AF_1067"/>
<dbReference type="PaxDb" id="224325-AF_1067"/>
<dbReference type="EnsemblBacteria" id="AAB90173">
    <property type="protein sequence ID" value="AAB90173"/>
    <property type="gene ID" value="AF_1067"/>
</dbReference>
<dbReference type="KEGG" id="afu:AF_1067"/>
<dbReference type="eggNOG" id="arCOG01753">
    <property type="taxonomic scope" value="Archaea"/>
</dbReference>
<dbReference type="HOGENOM" id="CLU_110989_1_0_2"/>
<dbReference type="OrthoDB" id="10360at2157"/>
<dbReference type="PhylomeDB" id="O29195"/>
<dbReference type="Proteomes" id="UP000002199">
    <property type="component" value="Chromosome"/>
</dbReference>
<dbReference type="GO" id="GO:0005694">
    <property type="term" value="C:chromosome"/>
    <property type="evidence" value="ECO:0007669"/>
    <property type="project" value="UniProtKB-SubCell"/>
</dbReference>
<dbReference type="GO" id="GO:0005737">
    <property type="term" value="C:cytoplasm"/>
    <property type="evidence" value="ECO:0007669"/>
    <property type="project" value="UniProtKB-SubCell"/>
</dbReference>
<dbReference type="GO" id="GO:0003690">
    <property type="term" value="F:double-stranded DNA binding"/>
    <property type="evidence" value="ECO:0007669"/>
    <property type="project" value="UniProtKB-UniRule"/>
</dbReference>
<dbReference type="GO" id="GO:0003723">
    <property type="term" value="F:RNA binding"/>
    <property type="evidence" value="ECO:0007669"/>
    <property type="project" value="InterPro"/>
</dbReference>
<dbReference type="GO" id="GO:0030261">
    <property type="term" value="P:chromosome condensation"/>
    <property type="evidence" value="ECO:0007669"/>
    <property type="project" value="UniProtKB-KW"/>
</dbReference>
<dbReference type="Gene3D" id="3.30.110.20">
    <property type="entry name" value="Alba-like domain"/>
    <property type="match status" value="1"/>
</dbReference>
<dbReference type="HAMAP" id="MF_01122">
    <property type="entry name" value="AlbA"/>
    <property type="match status" value="1"/>
</dbReference>
<dbReference type="InterPro" id="IPR036882">
    <property type="entry name" value="Alba-like_dom_sf"/>
</dbReference>
<dbReference type="InterPro" id="IPR013795">
    <property type="entry name" value="DNA/RNA-bd_Alba"/>
</dbReference>
<dbReference type="InterPro" id="IPR002775">
    <property type="entry name" value="DNA/RNA-bd_Alba-like"/>
</dbReference>
<dbReference type="NCBIfam" id="TIGR00285">
    <property type="entry name" value="DNA-binding protein Alba"/>
    <property type="match status" value="1"/>
</dbReference>
<dbReference type="NCBIfam" id="NF003088">
    <property type="entry name" value="PRK04015.1"/>
    <property type="match status" value="1"/>
</dbReference>
<dbReference type="Pfam" id="PF01918">
    <property type="entry name" value="Alba"/>
    <property type="match status" value="1"/>
</dbReference>
<dbReference type="PIRSF" id="PIRSF028732">
    <property type="entry name" value="Alba"/>
    <property type="match status" value="1"/>
</dbReference>
<dbReference type="SUPFAM" id="SSF82704">
    <property type="entry name" value="AlbA-like"/>
    <property type="match status" value="1"/>
</dbReference>
<comment type="function">
    <text evidence="1">Binds double-stranded DNA tightly but without sequence specificity. Involved in DNA compaction.</text>
</comment>
<comment type="subcellular location">
    <subcellularLocation>
        <location evidence="1">Cytoplasm</location>
    </subcellularLocation>
    <subcellularLocation>
        <location evidence="1">Chromosome</location>
    </subcellularLocation>
</comment>
<comment type="similarity">
    <text evidence="1 2">Belongs to the histone-like Alba family.</text>
</comment>
<protein>
    <recommendedName>
        <fullName evidence="1">DNA/RNA-binding protein Alba 1</fullName>
    </recommendedName>
    <alternativeName>
        <fullName>Af2</fullName>
    </alternativeName>
</protein>
<gene>
    <name evidence="1" type="primary">albA1</name>
    <name type="ordered locus">AF_1067</name>
</gene>
<organism>
    <name type="scientific">Archaeoglobus fulgidus (strain ATCC 49558 / DSM 4304 / JCM 9628 / NBRC 100126 / VC-16)</name>
    <dbReference type="NCBI Taxonomy" id="224325"/>
    <lineage>
        <taxon>Archaea</taxon>
        <taxon>Methanobacteriati</taxon>
        <taxon>Methanobacteriota</taxon>
        <taxon>Archaeoglobi</taxon>
        <taxon>Archaeoglobales</taxon>
        <taxon>Archaeoglobaceae</taxon>
        <taxon>Archaeoglobus</taxon>
    </lineage>
</organism>
<keyword id="KW-0158">Chromosome</keyword>
<keyword id="KW-0963">Cytoplasm</keyword>
<keyword id="KW-0226">DNA condensation</keyword>
<keyword id="KW-0238">DNA-binding</keyword>
<keyword id="KW-1185">Reference proteome</keyword>
<proteinExistence type="inferred from homology"/>
<feature type="chain" id="PRO_0000151696" description="DNA/RNA-binding protein Alba 1">
    <location>
        <begin position="1"/>
        <end position="89"/>
    </location>
</feature>